<accession>Q9WUZ7</accession>
<gene>
    <name type="primary">Sh3bgr</name>
</gene>
<reference key="1">
    <citation type="submission" date="1999-06" db="EMBL/GenBank/DDBJ databases">
        <authorList>
            <person name="Scartezzini P."/>
        </authorList>
    </citation>
    <scope>NUCLEOTIDE SEQUENCE [MRNA]</scope>
    <source>
        <tissue>Fetal heart</tissue>
    </source>
</reference>
<reference key="2">
    <citation type="journal article" date="2010" name="Cell">
        <title>A tissue-specific atlas of mouse protein phosphorylation and expression.</title>
        <authorList>
            <person name="Huttlin E.L."/>
            <person name="Jedrychowski M.P."/>
            <person name="Elias J.E."/>
            <person name="Goswami T."/>
            <person name="Rad R."/>
            <person name="Beausoleil S.A."/>
            <person name="Villen J."/>
            <person name="Haas W."/>
            <person name="Sowa M.E."/>
            <person name="Gygi S.P."/>
        </authorList>
    </citation>
    <scope>IDENTIFICATION BY MASS SPECTROMETRY [LARGE SCALE ANALYSIS]</scope>
    <source>
        <tissue>Brown adipose tissue</tissue>
        <tissue>Heart</tissue>
        <tissue>Lung</tissue>
        <tissue>Testis</tissue>
    </source>
</reference>
<organism>
    <name type="scientific">Mus musculus</name>
    <name type="common">Mouse</name>
    <dbReference type="NCBI Taxonomy" id="10090"/>
    <lineage>
        <taxon>Eukaryota</taxon>
        <taxon>Metazoa</taxon>
        <taxon>Chordata</taxon>
        <taxon>Craniata</taxon>
        <taxon>Vertebrata</taxon>
        <taxon>Euteleostomi</taxon>
        <taxon>Mammalia</taxon>
        <taxon>Eutheria</taxon>
        <taxon>Euarchontoglires</taxon>
        <taxon>Glires</taxon>
        <taxon>Rodentia</taxon>
        <taxon>Myomorpha</taxon>
        <taxon>Muroidea</taxon>
        <taxon>Muridae</taxon>
        <taxon>Murinae</taxon>
        <taxon>Mus</taxon>
        <taxon>Mus</taxon>
    </lineage>
</organism>
<evidence type="ECO:0000255" key="1"/>
<evidence type="ECO:0000256" key="2">
    <source>
        <dbReference type="SAM" id="MobiDB-lite"/>
    </source>
</evidence>
<evidence type="ECO:0000305" key="3"/>
<keyword id="KW-1185">Reference proteome</keyword>
<keyword id="KW-0729">SH3-binding</keyword>
<comment type="similarity">
    <text evidence="3">Belongs to the SH3BGR family.</text>
</comment>
<name>SH3BG_MOUSE</name>
<sequence length="214" mass="23102">MVIKVFVATSSGSIAIRKKQQEVVGFLEANKIDFKELDIAGDEDNRKWMRENVPGEKKPQNGIPLPPQIFNEEQYCGDFDSFFSAKEENIIYSFLGLAPPPGSKVTKSEEASSLPNGDVAGEAEGAAEGTEKAEKSGENEAQKEDSEDTGELSESQEKKEEEGEDGEEGEEGEEREEGGEGETTGETEEAPEEGAGGEAEEEEPEEEAGEGEDS</sequence>
<feature type="chain" id="PRO_0000220744" description="SH3 domain-binding glutamic acid-rich protein">
    <location>
        <begin position="1"/>
        <end position="214"/>
    </location>
</feature>
<feature type="region of interest" description="Disordered" evidence="2">
    <location>
        <begin position="101"/>
        <end position="214"/>
    </location>
</feature>
<feature type="short sequence motif" description="SH3-binding" evidence="1">
    <location>
        <begin position="61"/>
        <end position="67"/>
    </location>
</feature>
<feature type="compositionally biased region" description="Basic and acidic residues" evidence="2">
    <location>
        <begin position="129"/>
        <end position="144"/>
    </location>
</feature>
<feature type="compositionally biased region" description="Acidic residues" evidence="2">
    <location>
        <begin position="162"/>
        <end position="192"/>
    </location>
</feature>
<feature type="compositionally biased region" description="Acidic residues" evidence="2">
    <location>
        <begin position="198"/>
        <end position="214"/>
    </location>
</feature>
<proteinExistence type="evidence at protein level"/>
<dbReference type="EMBL" id="AJ239082">
    <property type="protein sequence ID" value="CAB44710.1"/>
    <property type="molecule type" value="mRNA"/>
</dbReference>
<dbReference type="CCDS" id="CCDS28355.1"/>
<dbReference type="RefSeq" id="NP_056640.1">
    <property type="nucleotide sequence ID" value="NM_015825.2"/>
</dbReference>
<dbReference type="SMR" id="Q9WUZ7"/>
<dbReference type="FunCoup" id="Q9WUZ7">
    <property type="interactions" value="367"/>
</dbReference>
<dbReference type="STRING" id="10090.ENSMUSP00000038110"/>
<dbReference type="GlyGen" id="Q9WUZ7">
    <property type="glycosylation" value="1 site, 1 O-linked glycan (1 site)"/>
</dbReference>
<dbReference type="iPTMnet" id="Q9WUZ7"/>
<dbReference type="PhosphoSitePlus" id="Q9WUZ7"/>
<dbReference type="jPOST" id="Q9WUZ7"/>
<dbReference type="PaxDb" id="10090-ENSMUSP00000038110"/>
<dbReference type="ProteomicsDB" id="261022"/>
<dbReference type="DNASU" id="50795"/>
<dbReference type="Ensembl" id="ENSMUST00000048770.16">
    <property type="protein sequence ID" value="ENSMUSP00000038110.9"/>
    <property type="gene ID" value="ENSMUSG00000040666.21"/>
</dbReference>
<dbReference type="Ensembl" id="ENSMUST00000171181.9">
    <property type="protein sequence ID" value="ENSMUSP00000126581.3"/>
    <property type="gene ID" value="ENSMUSG00000040666.21"/>
</dbReference>
<dbReference type="GeneID" id="50795"/>
<dbReference type="KEGG" id="mmu:50795"/>
<dbReference type="UCSC" id="uc008acu.1">
    <property type="organism name" value="mouse"/>
</dbReference>
<dbReference type="AGR" id="MGI:1354740"/>
<dbReference type="CTD" id="6450"/>
<dbReference type="MGI" id="MGI:1354740">
    <property type="gene designation" value="Sh3bgr"/>
</dbReference>
<dbReference type="VEuPathDB" id="HostDB:ENSMUSG00000040666"/>
<dbReference type="eggNOG" id="KOG4023">
    <property type="taxonomic scope" value="Eukaryota"/>
</dbReference>
<dbReference type="GeneTree" id="ENSGT00940000159847"/>
<dbReference type="HOGENOM" id="CLU_084862_0_1_1"/>
<dbReference type="InParanoid" id="Q9WUZ7"/>
<dbReference type="OMA" id="FNEKEYC"/>
<dbReference type="OrthoDB" id="81966at9989"/>
<dbReference type="PhylomeDB" id="Q9WUZ7"/>
<dbReference type="TreeFam" id="TF105574"/>
<dbReference type="BioGRID-ORCS" id="50795">
    <property type="hits" value="1 hit in 77 CRISPR screens"/>
</dbReference>
<dbReference type="ChiTaRS" id="Sh3bgr">
    <property type="organism name" value="mouse"/>
</dbReference>
<dbReference type="PRO" id="PR:Q9WUZ7"/>
<dbReference type="Proteomes" id="UP000000589">
    <property type="component" value="Chromosome 16"/>
</dbReference>
<dbReference type="RNAct" id="Q9WUZ7">
    <property type="molecule type" value="protein"/>
</dbReference>
<dbReference type="Bgee" id="ENSMUSG00000040666">
    <property type="expression patterns" value="Expressed in triceps brachii and 189 other cell types or tissues"/>
</dbReference>
<dbReference type="ExpressionAtlas" id="Q9WUZ7">
    <property type="expression patterns" value="baseline and differential"/>
</dbReference>
<dbReference type="GO" id="GO:0017124">
    <property type="term" value="F:SH3 domain binding"/>
    <property type="evidence" value="ECO:0007669"/>
    <property type="project" value="UniProtKB-KW"/>
</dbReference>
<dbReference type="CDD" id="cd03030">
    <property type="entry name" value="GRX_SH3BGR"/>
    <property type="match status" value="1"/>
</dbReference>
<dbReference type="FunFam" id="3.40.30.10:FF:000065">
    <property type="entry name" value="SH3 domain-binding glutamic acid-rich-like protein"/>
    <property type="match status" value="1"/>
</dbReference>
<dbReference type="Gene3D" id="3.40.30.10">
    <property type="entry name" value="Glutaredoxin"/>
    <property type="match status" value="1"/>
</dbReference>
<dbReference type="InterPro" id="IPR006993">
    <property type="entry name" value="Glut_rich_SH3-bd"/>
</dbReference>
<dbReference type="InterPro" id="IPR051033">
    <property type="entry name" value="SH3BGR"/>
</dbReference>
<dbReference type="InterPro" id="IPR036249">
    <property type="entry name" value="Thioredoxin-like_sf"/>
</dbReference>
<dbReference type="PANTHER" id="PTHR12232:SF1">
    <property type="entry name" value="SH3 DOMAIN-BINDING GLUTAMIC ACID-RICH PROTEIN"/>
    <property type="match status" value="1"/>
</dbReference>
<dbReference type="PANTHER" id="PTHR12232">
    <property type="entry name" value="SH3 DOMAIN-BINDING GLUTAMIC ACID-RICH-LIKE PROTEIN"/>
    <property type="match status" value="1"/>
</dbReference>
<dbReference type="Pfam" id="PF04908">
    <property type="entry name" value="SH3BGR"/>
    <property type="match status" value="1"/>
</dbReference>
<dbReference type="SUPFAM" id="SSF52833">
    <property type="entry name" value="Thioredoxin-like"/>
    <property type="match status" value="1"/>
</dbReference>
<protein>
    <recommendedName>
        <fullName>SH3 domain-binding glutamic acid-rich protein</fullName>
        <shortName>SH3BGR protein</shortName>
    </recommendedName>
</protein>